<keyword id="KW-0963">Cytoplasm</keyword>
<keyword id="KW-0350">Heme biosynthesis</keyword>
<keyword id="KW-0479">Metal-binding</keyword>
<keyword id="KW-0560">Oxidoreductase</keyword>
<keyword id="KW-0627">Porphyrin biosynthesis</keyword>
<feature type="chain" id="PRO_1000119829" description="Oxygen-dependent coproporphyrinogen-III oxidase">
    <location>
        <begin position="1"/>
        <end position="303"/>
    </location>
</feature>
<feature type="region of interest" description="Important for dimerization" evidence="1">
    <location>
        <begin position="268"/>
        <end position="303"/>
    </location>
</feature>
<feature type="active site" description="Proton donor" evidence="1">
    <location>
        <position position="131"/>
    </location>
</feature>
<feature type="binding site" evidence="1">
    <location>
        <position position="117"/>
    </location>
    <ligand>
        <name>substrate</name>
    </ligand>
</feature>
<feature type="binding site" evidence="1">
    <location>
        <position position="121"/>
    </location>
    <ligand>
        <name>a divalent metal cation</name>
        <dbReference type="ChEBI" id="CHEBI:60240"/>
    </ligand>
</feature>
<feature type="binding site" evidence="1">
    <location>
        <position position="131"/>
    </location>
    <ligand>
        <name>a divalent metal cation</name>
        <dbReference type="ChEBI" id="CHEBI:60240"/>
    </ligand>
</feature>
<feature type="binding site" evidence="1">
    <location>
        <begin position="133"/>
        <end position="135"/>
    </location>
    <ligand>
        <name>substrate</name>
    </ligand>
</feature>
<feature type="binding site" evidence="1">
    <location>
        <position position="169"/>
    </location>
    <ligand>
        <name>a divalent metal cation</name>
        <dbReference type="ChEBI" id="CHEBI:60240"/>
    </ligand>
</feature>
<feature type="binding site" evidence="1">
    <location>
        <position position="199"/>
    </location>
    <ligand>
        <name>a divalent metal cation</name>
        <dbReference type="ChEBI" id="CHEBI:60240"/>
    </ligand>
</feature>
<feature type="binding site" evidence="1">
    <location>
        <begin position="286"/>
        <end position="288"/>
    </location>
    <ligand>
        <name>substrate</name>
    </ligand>
</feature>
<feature type="site" description="Important for dimerization" evidence="1">
    <location>
        <position position="199"/>
    </location>
</feature>
<protein>
    <recommendedName>
        <fullName evidence="1">Oxygen-dependent coproporphyrinogen-III oxidase</fullName>
        <shortName evidence="1">CPO</shortName>
        <shortName evidence="1">Coprogen oxidase</shortName>
        <shortName evidence="1">Coproporphyrinogenase</shortName>
        <ecNumber evidence="1">1.3.3.3</ecNumber>
    </recommendedName>
</protein>
<gene>
    <name evidence="1" type="primary">hemF</name>
    <name type="ordered locus">Smed_1549</name>
</gene>
<comment type="function">
    <text evidence="1">Involved in the heme biosynthesis. Catalyzes the aerobic oxidative decarboxylation of propionate groups of rings A and B of coproporphyrinogen-III to yield the vinyl groups in protoporphyrinogen-IX.</text>
</comment>
<comment type="catalytic activity">
    <reaction evidence="1">
        <text>coproporphyrinogen III + O2 + 2 H(+) = protoporphyrinogen IX + 2 CO2 + 2 H2O</text>
        <dbReference type="Rhea" id="RHEA:18257"/>
        <dbReference type="ChEBI" id="CHEBI:15377"/>
        <dbReference type="ChEBI" id="CHEBI:15378"/>
        <dbReference type="ChEBI" id="CHEBI:15379"/>
        <dbReference type="ChEBI" id="CHEBI:16526"/>
        <dbReference type="ChEBI" id="CHEBI:57307"/>
        <dbReference type="ChEBI" id="CHEBI:57309"/>
        <dbReference type="EC" id="1.3.3.3"/>
    </reaction>
</comment>
<comment type="cofactor">
    <cofactor evidence="1">
        <name>a divalent metal cation</name>
        <dbReference type="ChEBI" id="CHEBI:60240"/>
    </cofactor>
</comment>
<comment type="pathway">
    <text evidence="1">Porphyrin-containing compound metabolism; protoporphyrin-IX biosynthesis; protoporphyrinogen-IX from coproporphyrinogen-III (O2 route): step 1/1.</text>
</comment>
<comment type="subunit">
    <text evidence="1">Homodimer.</text>
</comment>
<comment type="subcellular location">
    <subcellularLocation>
        <location evidence="1">Cytoplasm</location>
    </subcellularLocation>
</comment>
<comment type="similarity">
    <text evidence="1">Belongs to the aerobic coproporphyrinogen-III oxidase family.</text>
</comment>
<evidence type="ECO:0000255" key="1">
    <source>
        <dbReference type="HAMAP-Rule" id="MF_00333"/>
    </source>
</evidence>
<proteinExistence type="inferred from homology"/>
<sequence>MERPQLPQGLPADIERKKAEAKAWFESLRDTICADFEAIEDDLAGPLSDRPAGRFVAKDWLRDEGNGGGGRMSMMEGRVFEKVGVHTSTVFGEFSPEFRDQIPGASEDPRFWASGISLIAHPVNPNVPAVHMNTRMVVTTSNWFGGGADLTPVLDRRRIPTDADTVLFHRAMEIACNRHKVADYPKFKQWCDEYFYLKHRNEPRGTGGIFYDWLRSDEEIGGWEADFAFTRDVGKAFAIVYPRIVRTNFNMPWTEQDRSEQLVRRGRYVEFNLLYDRGTIFGLKTGGNVESILSSLPPLVRWP</sequence>
<reference key="1">
    <citation type="submission" date="2007-06" db="EMBL/GenBank/DDBJ databases">
        <title>Complete sequence of Sinorhizobium medicae WSM419 chromosome.</title>
        <authorList>
            <consortium name="US DOE Joint Genome Institute"/>
            <person name="Copeland A."/>
            <person name="Lucas S."/>
            <person name="Lapidus A."/>
            <person name="Barry K."/>
            <person name="Glavina del Rio T."/>
            <person name="Dalin E."/>
            <person name="Tice H."/>
            <person name="Pitluck S."/>
            <person name="Chain P."/>
            <person name="Malfatti S."/>
            <person name="Shin M."/>
            <person name="Vergez L."/>
            <person name="Schmutz J."/>
            <person name="Larimer F."/>
            <person name="Land M."/>
            <person name="Hauser L."/>
            <person name="Kyrpides N."/>
            <person name="Mikhailova N."/>
            <person name="Reeve W.G."/>
            <person name="Richardson P."/>
        </authorList>
    </citation>
    <scope>NUCLEOTIDE SEQUENCE [LARGE SCALE GENOMIC DNA]</scope>
    <source>
        <strain>WSM419</strain>
    </source>
</reference>
<organism>
    <name type="scientific">Sinorhizobium medicae (strain WSM419)</name>
    <name type="common">Ensifer medicae</name>
    <dbReference type="NCBI Taxonomy" id="366394"/>
    <lineage>
        <taxon>Bacteria</taxon>
        <taxon>Pseudomonadati</taxon>
        <taxon>Pseudomonadota</taxon>
        <taxon>Alphaproteobacteria</taxon>
        <taxon>Hyphomicrobiales</taxon>
        <taxon>Rhizobiaceae</taxon>
        <taxon>Sinorhizobium/Ensifer group</taxon>
        <taxon>Sinorhizobium</taxon>
    </lineage>
</organism>
<dbReference type="EC" id="1.3.3.3" evidence="1"/>
<dbReference type="EMBL" id="CP000738">
    <property type="protein sequence ID" value="ABR60391.1"/>
    <property type="molecule type" value="Genomic_DNA"/>
</dbReference>
<dbReference type="RefSeq" id="WP_011975699.1">
    <property type="nucleotide sequence ID" value="NC_009636.1"/>
</dbReference>
<dbReference type="RefSeq" id="YP_001327226.1">
    <property type="nucleotide sequence ID" value="NC_009636.1"/>
</dbReference>
<dbReference type="SMR" id="A6U9R1"/>
<dbReference type="STRING" id="366394.Smed_1549"/>
<dbReference type="GeneID" id="61612782"/>
<dbReference type="KEGG" id="smd:Smed_1549"/>
<dbReference type="PATRIC" id="fig|366394.8.peg.4684"/>
<dbReference type="eggNOG" id="COG0408">
    <property type="taxonomic scope" value="Bacteria"/>
</dbReference>
<dbReference type="HOGENOM" id="CLU_026169_0_1_5"/>
<dbReference type="OrthoDB" id="9777553at2"/>
<dbReference type="UniPathway" id="UPA00251">
    <property type="reaction ID" value="UER00322"/>
</dbReference>
<dbReference type="Proteomes" id="UP000001108">
    <property type="component" value="Chromosome"/>
</dbReference>
<dbReference type="GO" id="GO:0005737">
    <property type="term" value="C:cytoplasm"/>
    <property type="evidence" value="ECO:0007669"/>
    <property type="project" value="UniProtKB-SubCell"/>
</dbReference>
<dbReference type="GO" id="GO:0004109">
    <property type="term" value="F:coproporphyrinogen oxidase activity"/>
    <property type="evidence" value="ECO:0007669"/>
    <property type="project" value="UniProtKB-UniRule"/>
</dbReference>
<dbReference type="GO" id="GO:0046872">
    <property type="term" value="F:metal ion binding"/>
    <property type="evidence" value="ECO:0007669"/>
    <property type="project" value="UniProtKB-KW"/>
</dbReference>
<dbReference type="GO" id="GO:0042803">
    <property type="term" value="F:protein homodimerization activity"/>
    <property type="evidence" value="ECO:0000250"/>
    <property type="project" value="UniProtKB"/>
</dbReference>
<dbReference type="GO" id="GO:0006782">
    <property type="term" value="P:protoporphyrinogen IX biosynthetic process"/>
    <property type="evidence" value="ECO:0007669"/>
    <property type="project" value="UniProtKB-UniRule"/>
</dbReference>
<dbReference type="FunFam" id="3.40.1500.10:FF:000005">
    <property type="entry name" value="Oxygen-dependent coproporphyrinogen-III oxidase"/>
    <property type="match status" value="1"/>
</dbReference>
<dbReference type="Gene3D" id="3.40.1500.10">
    <property type="entry name" value="Coproporphyrinogen III oxidase, aerobic"/>
    <property type="match status" value="1"/>
</dbReference>
<dbReference type="HAMAP" id="MF_00333">
    <property type="entry name" value="Coprogen_oxidas"/>
    <property type="match status" value="1"/>
</dbReference>
<dbReference type="InterPro" id="IPR001260">
    <property type="entry name" value="Coprogen_oxidase_aer"/>
</dbReference>
<dbReference type="InterPro" id="IPR036406">
    <property type="entry name" value="Coprogen_oxidase_aer_sf"/>
</dbReference>
<dbReference type="InterPro" id="IPR018375">
    <property type="entry name" value="Coprogen_oxidase_CS"/>
</dbReference>
<dbReference type="NCBIfam" id="NF003727">
    <property type="entry name" value="PRK05330.1"/>
    <property type="match status" value="1"/>
</dbReference>
<dbReference type="PANTHER" id="PTHR10755">
    <property type="entry name" value="COPROPORPHYRINOGEN III OXIDASE, MITOCHONDRIAL"/>
    <property type="match status" value="1"/>
</dbReference>
<dbReference type="PANTHER" id="PTHR10755:SF0">
    <property type="entry name" value="OXYGEN-DEPENDENT COPROPORPHYRINOGEN-III OXIDASE, MITOCHONDRIAL"/>
    <property type="match status" value="1"/>
</dbReference>
<dbReference type="Pfam" id="PF01218">
    <property type="entry name" value="Coprogen_oxidas"/>
    <property type="match status" value="1"/>
</dbReference>
<dbReference type="PIRSF" id="PIRSF000166">
    <property type="entry name" value="Coproporphyri_ox"/>
    <property type="match status" value="1"/>
</dbReference>
<dbReference type="PRINTS" id="PR00073">
    <property type="entry name" value="COPRGNOXDASE"/>
</dbReference>
<dbReference type="SUPFAM" id="SSF102886">
    <property type="entry name" value="Coproporphyrinogen III oxidase"/>
    <property type="match status" value="1"/>
</dbReference>
<dbReference type="PROSITE" id="PS01021">
    <property type="entry name" value="COPROGEN_OXIDASE"/>
    <property type="match status" value="1"/>
</dbReference>
<name>HEM6_SINMW</name>
<accession>A6U9R1</accession>